<dbReference type="EC" id="5.4.3.8" evidence="1"/>
<dbReference type="EMBL" id="CP000817">
    <property type="protein sequence ID" value="ACA37961.1"/>
    <property type="molecule type" value="Genomic_DNA"/>
</dbReference>
<dbReference type="RefSeq" id="WP_012292122.1">
    <property type="nucleotide sequence ID" value="NC_010382.1"/>
</dbReference>
<dbReference type="SMR" id="B1HUT1"/>
<dbReference type="EnsemblBacteria" id="ACA37961">
    <property type="protein sequence ID" value="ACA37961"/>
    <property type="gene ID" value="Bsph_0332"/>
</dbReference>
<dbReference type="KEGG" id="lsp:Bsph_0332"/>
<dbReference type="HOGENOM" id="CLU_016922_1_5_9"/>
<dbReference type="UniPathway" id="UPA00251">
    <property type="reaction ID" value="UER00317"/>
</dbReference>
<dbReference type="Proteomes" id="UP000002164">
    <property type="component" value="Chromosome"/>
</dbReference>
<dbReference type="GO" id="GO:0005737">
    <property type="term" value="C:cytoplasm"/>
    <property type="evidence" value="ECO:0007669"/>
    <property type="project" value="UniProtKB-SubCell"/>
</dbReference>
<dbReference type="GO" id="GO:0042286">
    <property type="term" value="F:glutamate-1-semialdehyde 2,1-aminomutase activity"/>
    <property type="evidence" value="ECO:0007669"/>
    <property type="project" value="UniProtKB-UniRule"/>
</dbReference>
<dbReference type="GO" id="GO:0030170">
    <property type="term" value="F:pyridoxal phosphate binding"/>
    <property type="evidence" value="ECO:0007669"/>
    <property type="project" value="InterPro"/>
</dbReference>
<dbReference type="GO" id="GO:0008483">
    <property type="term" value="F:transaminase activity"/>
    <property type="evidence" value="ECO:0007669"/>
    <property type="project" value="InterPro"/>
</dbReference>
<dbReference type="GO" id="GO:0006782">
    <property type="term" value="P:protoporphyrinogen IX biosynthetic process"/>
    <property type="evidence" value="ECO:0007669"/>
    <property type="project" value="UniProtKB-UniRule"/>
</dbReference>
<dbReference type="CDD" id="cd00610">
    <property type="entry name" value="OAT_like"/>
    <property type="match status" value="1"/>
</dbReference>
<dbReference type="FunFam" id="3.40.640.10:FF:000021">
    <property type="entry name" value="Glutamate-1-semialdehyde 2,1-aminomutase"/>
    <property type="match status" value="1"/>
</dbReference>
<dbReference type="Gene3D" id="3.90.1150.10">
    <property type="entry name" value="Aspartate Aminotransferase, domain 1"/>
    <property type="match status" value="1"/>
</dbReference>
<dbReference type="Gene3D" id="3.40.640.10">
    <property type="entry name" value="Type I PLP-dependent aspartate aminotransferase-like (Major domain)"/>
    <property type="match status" value="1"/>
</dbReference>
<dbReference type="HAMAP" id="MF_00375">
    <property type="entry name" value="HemL_aminotrans_3"/>
    <property type="match status" value="1"/>
</dbReference>
<dbReference type="InterPro" id="IPR004639">
    <property type="entry name" value="4pyrrol_synth_GluAld_NH2Trfase"/>
</dbReference>
<dbReference type="InterPro" id="IPR005814">
    <property type="entry name" value="Aminotrans_3"/>
</dbReference>
<dbReference type="InterPro" id="IPR015424">
    <property type="entry name" value="PyrdxlP-dep_Trfase"/>
</dbReference>
<dbReference type="InterPro" id="IPR015421">
    <property type="entry name" value="PyrdxlP-dep_Trfase_major"/>
</dbReference>
<dbReference type="InterPro" id="IPR015422">
    <property type="entry name" value="PyrdxlP-dep_Trfase_small"/>
</dbReference>
<dbReference type="NCBIfam" id="TIGR00713">
    <property type="entry name" value="hemL"/>
    <property type="match status" value="1"/>
</dbReference>
<dbReference type="NCBIfam" id="NF000818">
    <property type="entry name" value="PRK00062.1"/>
    <property type="match status" value="1"/>
</dbReference>
<dbReference type="NCBIfam" id="NF009055">
    <property type="entry name" value="PRK12389.1"/>
    <property type="match status" value="1"/>
</dbReference>
<dbReference type="PANTHER" id="PTHR43713">
    <property type="entry name" value="GLUTAMATE-1-SEMIALDEHYDE 2,1-AMINOMUTASE"/>
    <property type="match status" value="1"/>
</dbReference>
<dbReference type="PANTHER" id="PTHR43713:SF1">
    <property type="entry name" value="GLUTAMATE-1-SEMIALDEHYDE 2,1-AMINOMUTASE 2"/>
    <property type="match status" value="1"/>
</dbReference>
<dbReference type="Pfam" id="PF00202">
    <property type="entry name" value="Aminotran_3"/>
    <property type="match status" value="1"/>
</dbReference>
<dbReference type="SUPFAM" id="SSF53383">
    <property type="entry name" value="PLP-dependent transferases"/>
    <property type="match status" value="1"/>
</dbReference>
<name>GSA1_LYSSC</name>
<gene>
    <name evidence="1" type="primary">hemL1</name>
    <name type="ordered locus">Bsph_0332</name>
</gene>
<proteinExistence type="inferred from homology"/>
<feature type="chain" id="PRO_0000382338" description="Glutamate-1-semialdehyde 2,1-aminomutase 1">
    <location>
        <begin position="1"/>
        <end position="429"/>
    </location>
</feature>
<feature type="modified residue" description="N6-(pyridoxal phosphate)lysine" evidence="1">
    <location>
        <position position="268"/>
    </location>
</feature>
<organism>
    <name type="scientific">Lysinibacillus sphaericus (strain C3-41)</name>
    <dbReference type="NCBI Taxonomy" id="444177"/>
    <lineage>
        <taxon>Bacteria</taxon>
        <taxon>Bacillati</taxon>
        <taxon>Bacillota</taxon>
        <taxon>Bacilli</taxon>
        <taxon>Bacillales</taxon>
        <taxon>Bacillaceae</taxon>
        <taxon>Lysinibacillus</taxon>
    </lineage>
</organism>
<protein>
    <recommendedName>
        <fullName evidence="1">Glutamate-1-semialdehyde 2,1-aminomutase 1</fullName>
        <shortName evidence="1">GSA 1</shortName>
        <ecNumber evidence="1">5.4.3.8</ecNumber>
    </recommendedName>
    <alternativeName>
        <fullName evidence="1">Glutamate-1-semialdehyde aminotransferase 1</fullName>
        <shortName evidence="1">GSA-AT 1</shortName>
    </alternativeName>
</protein>
<accession>B1HUT1</accession>
<sequence length="429" mass="45738">MNHAKSEAVHAEALQHIVGGVNSPSRSYKAVGGGSPVAMVRGKGAYFWDVDGNRYIDYLAAYGPIVTGHGHPHIAKAITHAAENGTLFGTPTEYEVTFANMLKEAIPSMDKVRFNNSGTEAVMTTIRVARAYTGRTKIMKFAGCYHGHFDLVLVAAGSGPATLGTPDSAGVTTSTAEEVITVPFNNPEAFTEAMNTWGDEIAAILIEPIVGNFGIVEPNPGFLELVHATAKEKGALTIYDEVITAFRFHYGGAQNLLGLTPDLTALGKVIGGGLPIGAYGGRKEIMDTVAPLGPAYQAGTMAGNPASMQAGIACLEVLQTPGIYDEMDRLGGILEEGILAAAKEHGVTITLNRLKGALTIYFTDVKVENYEQAENSNGEIFGRFFKLMLEQGVNLAPSKYEAWFLTTEHTEADILETIKAVNYAFSQLS</sequence>
<reference key="1">
    <citation type="journal article" date="2008" name="J. Bacteriol.">
        <title>Complete genome sequence of the mosquitocidal bacterium Bacillus sphaericus C3-41 and comparison with those of closely related Bacillus species.</title>
        <authorList>
            <person name="Hu X."/>
            <person name="Fan W."/>
            <person name="Han B."/>
            <person name="Liu H."/>
            <person name="Zheng D."/>
            <person name="Li Q."/>
            <person name="Dong W."/>
            <person name="Yan J."/>
            <person name="Gao M."/>
            <person name="Berry C."/>
            <person name="Yuan Z."/>
        </authorList>
    </citation>
    <scope>NUCLEOTIDE SEQUENCE [LARGE SCALE GENOMIC DNA]</scope>
    <source>
        <strain>C3-41</strain>
    </source>
</reference>
<evidence type="ECO:0000255" key="1">
    <source>
        <dbReference type="HAMAP-Rule" id="MF_00375"/>
    </source>
</evidence>
<keyword id="KW-0963">Cytoplasm</keyword>
<keyword id="KW-0413">Isomerase</keyword>
<keyword id="KW-0627">Porphyrin biosynthesis</keyword>
<keyword id="KW-0663">Pyridoxal phosphate</keyword>
<comment type="catalytic activity">
    <reaction evidence="1">
        <text>(S)-4-amino-5-oxopentanoate = 5-aminolevulinate</text>
        <dbReference type="Rhea" id="RHEA:14265"/>
        <dbReference type="ChEBI" id="CHEBI:57501"/>
        <dbReference type="ChEBI" id="CHEBI:356416"/>
        <dbReference type="EC" id="5.4.3.8"/>
    </reaction>
</comment>
<comment type="cofactor">
    <cofactor evidence="1">
        <name>pyridoxal 5'-phosphate</name>
        <dbReference type="ChEBI" id="CHEBI:597326"/>
    </cofactor>
</comment>
<comment type="pathway">
    <text evidence="1">Porphyrin-containing compound metabolism; protoporphyrin-IX biosynthesis; 5-aminolevulinate from L-glutamyl-tRNA(Glu): step 2/2.</text>
</comment>
<comment type="subunit">
    <text evidence="1">Homodimer.</text>
</comment>
<comment type="subcellular location">
    <subcellularLocation>
        <location evidence="1">Cytoplasm</location>
    </subcellularLocation>
</comment>
<comment type="similarity">
    <text evidence="1">Belongs to the class-III pyridoxal-phosphate-dependent aminotransferase family. HemL subfamily.</text>
</comment>